<sequence>MEPFTTHTGRAVPLRRSNVDTDQIIPAVYLKRVSRTGFADGLFAAWRQDPGFVLNRPEFAGADILVAGPDFGTGSSREHAVWALQDYGFRVVISPRFGDIFRNNALKGGLLAVVLPESDVEALWDVVESDPATPVTVDLVTREVRYADVVRGFDIDDYTRWRLMEGLDDIGLTLRHADAIDAFEARRPAWKPTTRAS</sequence>
<name>LEUD_ACIC1</name>
<dbReference type="EC" id="4.2.1.33" evidence="1"/>
<dbReference type="EMBL" id="CP000481">
    <property type="protein sequence ID" value="ABK53362.1"/>
    <property type="molecule type" value="Genomic_DNA"/>
</dbReference>
<dbReference type="RefSeq" id="WP_011720425.1">
    <property type="nucleotide sequence ID" value="NC_008578.1"/>
</dbReference>
<dbReference type="SMR" id="A0LVA2"/>
<dbReference type="FunCoup" id="A0LVA2">
    <property type="interactions" value="118"/>
</dbReference>
<dbReference type="STRING" id="351607.Acel_1590"/>
<dbReference type="KEGG" id="ace:Acel_1590"/>
<dbReference type="eggNOG" id="COG0066">
    <property type="taxonomic scope" value="Bacteria"/>
</dbReference>
<dbReference type="HOGENOM" id="CLU_081378_0_1_11"/>
<dbReference type="InParanoid" id="A0LVA2"/>
<dbReference type="OrthoDB" id="9777465at2"/>
<dbReference type="UniPathway" id="UPA00048">
    <property type="reaction ID" value="UER00071"/>
</dbReference>
<dbReference type="Proteomes" id="UP000008221">
    <property type="component" value="Chromosome"/>
</dbReference>
<dbReference type="GO" id="GO:0009316">
    <property type="term" value="C:3-isopropylmalate dehydratase complex"/>
    <property type="evidence" value="ECO:0007669"/>
    <property type="project" value="InterPro"/>
</dbReference>
<dbReference type="GO" id="GO:0003861">
    <property type="term" value="F:3-isopropylmalate dehydratase activity"/>
    <property type="evidence" value="ECO:0007669"/>
    <property type="project" value="UniProtKB-UniRule"/>
</dbReference>
<dbReference type="GO" id="GO:0009098">
    <property type="term" value="P:L-leucine biosynthetic process"/>
    <property type="evidence" value="ECO:0007669"/>
    <property type="project" value="UniProtKB-UniRule"/>
</dbReference>
<dbReference type="CDD" id="cd01577">
    <property type="entry name" value="IPMI_Swivel"/>
    <property type="match status" value="1"/>
</dbReference>
<dbReference type="FunFam" id="3.20.19.10:FF:000003">
    <property type="entry name" value="3-isopropylmalate dehydratase small subunit"/>
    <property type="match status" value="1"/>
</dbReference>
<dbReference type="Gene3D" id="3.20.19.10">
    <property type="entry name" value="Aconitase, domain 4"/>
    <property type="match status" value="1"/>
</dbReference>
<dbReference type="HAMAP" id="MF_01031">
    <property type="entry name" value="LeuD_type1"/>
    <property type="match status" value="1"/>
</dbReference>
<dbReference type="InterPro" id="IPR004431">
    <property type="entry name" value="3-IsopropMal_deHydase_ssu"/>
</dbReference>
<dbReference type="InterPro" id="IPR015928">
    <property type="entry name" value="Aconitase/3IPM_dehydase_swvl"/>
</dbReference>
<dbReference type="InterPro" id="IPR000573">
    <property type="entry name" value="AconitaseA/IPMdHydase_ssu_swvl"/>
</dbReference>
<dbReference type="InterPro" id="IPR033940">
    <property type="entry name" value="IPMI_Swivel"/>
</dbReference>
<dbReference type="InterPro" id="IPR050075">
    <property type="entry name" value="LeuD"/>
</dbReference>
<dbReference type="NCBIfam" id="TIGR00171">
    <property type="entry name" value="leuD"/>
    <property type="match status" value="1"/>
</dbReference>
<dbReference type="NCBIfam" id="NF002458">
    <property type="entry name" value="PRK01641.1"/>
    <property type="match status" value="1"/>
</dbReference>
<dbReference type="PANTHER" id="PTHR43345:SF5">
    <property type="entry name" value="3-ISOPROPYLMALATE DEHYDRATASE SMALL SUBUNIT"/>
    <property type="match status" value="1"/>
</dbReference>
<dbReference type="PANTHER" id="PTHR43345">
    <property type="entry name" value="3-ISOPROPYLMALATE DEHYDRATASE SMALL SUBUNIT 2-RELATED-RELATED"/>
    <property type="match status" value="1"/>
</dbReference>
<dbReference type="Pfam" id="PF00694">
    <property type="entry name" value="Aconitase_C"/>
    <property type="match status" value="1"/>
</dbReference>
<dbReference type="SUPFAM" id="SSF52016">
    <property type="entry name" value="LeuD/IlvD-like"/>
    <property type="match status" value="1"/>
</dbReference>
<evidence type="ECO:0000255" key="1">
    <source>
        <dbReference type="HAMAP-Rule" id="MF_01031"/>
    </source>
</evidence>
<comment type="function">
    <text evidence="1">Catalyzes the isomerization between 2-isopropylmalate and 3-isopropylmalate, via the formation of 2-isopropylmaleate.</text>
</comment>
<comment type="catalytic activity">
    <reaction evidence="1">
        <text>(2R,3S)-3-isopropylmalate = (2S)-2-isopropylmalate</text>
        <dbReference type="Rhea" id="RHEA:32287"/>
        <dbReference type="ChEBI" id="CHEBI:1178"/>
        <dbReference type="ChEBI" id="CHEBI:35121"/>
        <dbReference type="EC" id="4.2.1.33"/>
    </reaction>
</comment>
<comment type="pathway">
    <text evidence="1">Amino-acid biosynthesis; L-leucine biosynthesis; L-leucine from 3-methyl-2-oxobutanoate: step 2/4.</text>
</comment>
<comment type="subunit">
    <text evidence="1">Heterodimer of LeuC and LeuD.</text>
</comment>
<comment type="similarity">
    <text evidence="1">Belongs to the LeuD family. LeuD type 1 subfamily.</text>
</comment>
<reference key="1">
    <citation type="journal article" date="2009" name="Genome Res.">
        <title>Complete genome of the cellulolytic thermophile Acidothermus cellulolyticus 11B provides insights into its ecophysiological and evolutionary adaptations.</title>
        <authorList>
            <person name="Barabote R.D."/>
            <person name="Xie G."/>
            <person name="Leu D.H."/>
            <person name="Normand P."/>
            <person name="Necsulea A."/>
            <person name="Daubin V."/>
            <person name="Medigue C."/>
            <person name="Adney W.S."/>
            <person name="Xu X.C."/>
            <person name="Lapidus A."/>
            <person name="Parales R.E."/>
            <person name="Detter C."/>
            <person name="Pujic P."/>
            <person name="Bruce D."/>
            <person name="Lavire C."/>
            <person name="Challacombe J.F."/>
            <person name="Brettin T.S."/>
            <person name="Berry A.M."/>
        </authorList>
    </citation>
    <scope>NUCLEOTIDE SEQUENCE [LARGE SCALE GENOMIC DNA]</scope>
    <source>
        <strain>ATCC 43068 / DSM 8971 / 11B</strain>
    </source>
</reference>
<feature type="chain" id="PRO_1000063721" description="3-isopropylmalate dehydratase small subunit">
    <location>
        <begin position="1"/>
        <end position="197"/>
    </location>
</feature>
<protein>
    <recommendedName>
        <fullName evidence="1">3-isopropylmalate dehydratase small subunit</fullName>
        <ecNumber evidence="1">4.2.1.33</ecNumber>
    </recommendedName>
    <alternativeName>
        <fullName evidence="1">Alpha-IPM isomerase</fullName>
        <shortName evidence="1">IPMI</shortName>
    </alternativeName>
    <alternativeName>
        <fullName evidence="1">Isopropylmalate isomerase</fullName>
    </alternativeName>
</protein>
<proteinExistence type="inferred from homology"/>
<keyword id="KW-0028">Amino-acid biosynthesis</keyword>
<keyword id="KW-0100">Branched-chain amino acid biosynthesis</keyword>
<keyword id="KW-0432">Leucine biosynthesis</keyword>
<keyword id="KW-0456">Lyase</keyword>
<keyword id="KW-1185">Reference proteome</keyword>
<organism>
    <name type="scientific">Acidothermus cellulolyticus (strain ATCC 43068 / DSM 8971 / 11B)</name>
    <dbReference type="NCBI Taxonomy" id="351607"/>
    <lineage>
        <taxon>Bacteria</taxon>
        <taxon>Bacillati</taxon>
        <taxon>Actinomycetota</taxon>
        <taxon>Actinomycetes</taxon>
        <taxon>Acidothermales</taxon>
        <taxon>Acidothermaceae</taxon>
        <taxon>Acidothermus</taxon>
    </lineage>
</organism>
<accession>A0LVA2</accession>
<gene>
    <name evidence="1" type="primary">leuD</name>
    <name type="ordered locus">Acel_1590</name>
</gene>